<dbReference type="EMBL" id="X03346">
    <property type="protein sequence ID" value="CAA27052.1"/>
    <property type="molecule type" value="Genomic_DNA"/>
</dbReference>
<dbReference type="PIR" id="A24107">
    <property type="entry name" value="EEWTHW"/>
</dbReference>
<dbReference type="STRING" id="4565.P08489"/>
<dbReference type="Allergome" id="2898">
    <property type="allergen name" value="Tri a 26"/>
</dbReference>
<dbReference type="Proteomes" id="UP000019116">
    <property type="component" value="Unplaced"/>
</dbReference>
<dbReference type="GO" id="GO:0045735">
    <property type="term" value="F:nutrient reservoir activity"/>
    <property type="evidence" value="ECO:0007669"/>
    <property type="project" value="UniProtKB-KW"/>
</dbReference>
<dbReference type="InterPro" id="IPR036312">
    <property type="entry name" value="Bifun_inhib/LTP/seed_sf"/>
</dbReference>
<dbReference type="InterPro" id="IPR001419">
    <property type="entry name" value="Glutenin"/>
</dbReference>
<dbReference type="Pfam" id="PF03157">
    <property type="entry name" value="Glutenin_hmw"/>
    <property type="match status" value="2"/>
</dbReference>
<dbReference type="PRINTS" id="PR00210">
    <property type="entry name" value="GLUTENIN"/>
</dbReference>
<dbReference type="SUPFAM" id="SSF47699">
    <property type="entry name" value="Bifunctional inhibitor/lipid-transfer protein/seed storage 2S albumin"/>
    <property type="match status" value="1"/>
</dbReference>
<accession>P08489</accession>
<sequence>MAKRLVLFVAVVVALVALTVAEGEASEQLQCERELQELQERELKACQQVMDQQLRDISPECHPVVVSPVAGQYEQQIVVPKGGSFYPGETTPPQQLQQRIFWGIPALLKRYYPSVTSPQQVSYYPGQASPQRPGQGQQPGQGQQSGQGQQGYYPTSPQQPGQWQQPEQGQPGYYPTSPQQPGQLQQPAQGQQPGQGQQGRQPGQGQPGYYPTSSQLQPGQLQQPAQGQQGQQPGQGQQGQQPGQGQQPGQGQQGQQPGQGQQPGQGQQGQQLGQGQQGYYPTSLQQSGQGQPGYYPTSLQQLGQGQSGYYPTSPQQPGQGQQPGQLQQPAQGQQPEQGQQGQQPGQGQQGQQPGQGQQPGQGQPGYYPTSPQQSGQGQPGYYPTSSQQPTQSQQPGQGQQGQQVGQGQQAQQPGQGQQPGQGQPGYYPTSPLQSGQGQPGYYLTSPQQSGQGQQPGQLQQSAQGQKGQQPGQGQQPGQGQQGQQPGQGQQGQQPGQGQPGYYPTSPQQSGQGQQPGQWQQPGQGQPGYYPTSPLQPGQGQPGYDPTSPQQPGQGQQPGQLQQPAQGQQGQQLAQGQQGQQPAQVQQGQQPAQGQQGQQLGQGQQGQQPGQGQQPAQGQQGQQPGQGQQGQQPGQGQQPGQGQPWYYPTSPQESGQGQQPGQWQQPGQWQQPGQGQPGYYLTSPLQLGQGQQGYYPTSLQQPGQGQQPGQWQQSGQGQHGYYPTSPQLSGQGQRPGQWLQPGQGQQGYYPTSPQQSGQGQQLGQWLQPGQGQQGYYPTSLQQTGQGQQSGQGQQGYYSSYHVSVEHQAASLKVAKAQQLAAQLPAMCRLEGGDALSASQ</sequence>
<comment type="function">
    <text>Glutenins are high-molecular weight seed storage proteins of wheat endosperm. Thought to be responsible for the visco-elastic property of wheat dough.</text>
</comment>
<comment type="subunit">
    <text>Disulfide-bridge linked aggregates.</text>
</comment>
<comment type="miscellaneous">
    <text>Glutenins are coded by several genes on each of the group 1 chromosomes of wheat.</text>
</comment>
<comment type="miscellaneous">
    <text>The mature protein is characterized by a large number of well preserved repeats of the two motifs: GQQPGQ and GQQPGQGQQGYYPTS.</text>
</comment>
<comment type="similarity">
    <text evidence="2">Belongs to the gliadin/glutenin family.</text>
</comment>
<feature type="signal peptide">
    <location>
        <begin position="1"/>
        <end position="21"/>
    </location>
</feature>
<feature type="chain" id="PRO_0000032209" description="Glutenin, high molecular weight subunit PW212">
    <location>
        <begin position="22"/>
        <end position="838"/>
    </location>
</feature>
<feature type="region of interest" description="Disordered" evidence="1">
    <location>
        <begin position="122"/>
        <end position="794"/>
    </location>
</feature>
<feature type="compositionally biased region" description="Low complexity" evidence="1">
    <location>
        <begin position="125"/>
        <end position="136"/>
    </location>
</feature>
<feature type="compositionally biased region" description="Gly residues" evidence="1">
    <location>
        <begin position="137"/>
        <end position="149"/>
    </location>
</feature>
<feature type="compositionally biased region" description="Low complexity" evidence="1">
    <location>
        <begin position="150"/>
        <end position="172"/>
    </location>
</feature>
<feature type="compositionally biased region" description="Low complexity" evidence="1">
    <location>
        <begin position="179"/>
        <end position="208"/>
    </location>
</feature>
<feature type="compositionally biased region" description="Low complexity" evidence="1">
    <location>
        <begin position="215"/>
        <end position="245"/>
    </location>
</feature>
<feature type="compositionally biased region" description="Low complexity" evidence="1">
    <location>
        <begin position="268"/>
        <end position="308"/>
    </location>
</feature>
<feature type="compositionally biased region" description="Low complexity" evidence="1">
    <location>
        <begin position="315"/>
        <end position="356"/>
    </location>
</feature>
<feature type="compositionally biased region" description="Low complexity" evidence="1">
    <location>
        <begin position="364"/>
        <end position="416"/>
    </location>
</feature>
<feature type="compositionally biased region" description="Low complexity" evidence="1">
    <location>
        <begin position="445"/>
        <end position="473"/>
    </location>
</feature>
<feature type="compositionally biased region" description="Low complexity" evidence="1">
    <location>
        <begin position="481"/>
        <end position="532"/>
    </location>
</feature>
<feature type="compositionally biased region" description="Low complexity" evidence="1">
    <location>
        <begin position="549"/>
        <end position="643"/>
    </location>
</feature>
<feature type="compositionally biased region" description="Low complexity" evidence="1">
    <location>
        <begin position="654"/>
        <end position="677"/>
    </location>
</feature>
<feature type="compositionally biased region" description="Low complexity" evidence="1">
    <location>
        <begin position="699"/>
        <end position="719"/>
    </location>
</feature>
<feature type="compositionally biased region" description="Low complexity" evidence="1">
    <location>
        <begin position="729"/>
        <end position="773"/>
    </location>
</feature>
<reference key="1">
    <citation type="journal article" date="1985" name="Nucleic Acids Res.">
        <title>A wheat HMW glutenin subunit gene reveals a highly repeated structure.</title>
        <authorList>
            <person name="Sugiyama T."/>
            <person name="Rafalski A."/>
            <person name="Peterson D."/>
            <person name="Soll D.G."/>
        </authorList>
    </citation>
    <scope>NUCLEOTIDE SEQUENCE [GENOMIC DNA]</scope>
    <source>
        <strain>cv. Yamhill</strain>
    </source>
</reference>
<organism>
    <name type="scientific">Triticum aestivum</name>
    <name type="common">Wheat</name>
    <dbReference type="NCBI Taxonomy" id="4565"/>
    <lineage>
        <taxon>Eukaryota</taxon>
        <taxon>Viridiplantae</taxon>
        <taxon>Streptophyta</taxon>
        <taxon>Embryophyta</taxon>
        <taxon>Tracheophyta</taxon>
        <taxon>Spermatophyta</taxon>
        <taxon>Magnoliopsida</taxon>
        <taxon>Liliopsida</taxon>
        <taxon>Poales</taxon>
        <taxon>Poaceae</taxon>
        <taxon>BOP clade</taxon>
        <taxon>Pooideae</taxon>
        <taxon>Triticodae</taxon>
        <taxon>Triticeae</taxon>
        <taxon>Triticinae</taxon>
        <taxon>Triticum</taxon>
    </lineage>
</organism>
<evidence type="ECO:0000256" key="1">
    <source>
        <dbReference type="SAM" id="MobiDB-lite"/>
    </source>
</evidence>
<evidence type="ECO:0000305" key="2"/>
<name>GLT4_WHEAT</name>
<protein>
    <recommendedName>
        <fullName>Glutenin, high molecular weight subunit PW212</fullName>
    </recommendedName>
</protein>
<keyword id="KW-1015">Disulfide bond</keyword>
<keyword id="KW-1185">Reference proteome</keyword>
<keyword id="KW-0677">Repeat</keyword>
<keyword id="KW-0708">Seed storage protein</keyword>
<keyword id="KW-0732">Signal</keyword>
<keyword id="KW-0758">Storage protein</keyword>
<proteinExistence type="inferred from homology"/>